<keyword id="KW-0028">Amino-acid biosynthesis</keyword>
<keyword id="KW-0963">Cytoplasm</keyword>
<keyword id="KW-0521">NADP</keyword>
<keyword id="KW-0560">Oxidoreductase</keyword>
<keyword id="KW-0641">Proline biosynthesis</keyword>
<keyword id="KW-1185">Reference proteome</keyword>
<evidence type="ECO:0000255" key="1">
    <source>
        <dbReference type="HAMAP-Rule" id="MF_00412"/>
    </source>
</evidence>
<gene>
    <name evidence="1" type="primary">proA</name>
    <name type="ordered locus">Rcas_4447</name>
</gene>
<comment type="function">
    <text evidence="1">Catalyzes the NADPH-dependent reduction of L-glutamate 5-phosphate into L-glutamate 5-semialdehyde and phosphate. The product spontaneously undergoes cyclization to form 1-pyrroline-5-carboxylate.</text>
</comment>
<comment type="catalytic activity">
    <reaction evidence="1">
        <text>L-glutamate 5-semialdehyde + phosphate + NADP(+) = L-glutamyl 5-phosphate + NADPH + H(+)</text>
        <dbReference type="Rhea" id="RHEA:19541"/>
        <dbReference type="ChEBI" id="CHEBI:15378"/>
        <dbReference type="ChEBI" id="CHEBI:43474"/>
        <dbReference type="ChEBI" id="CHEBI:57783"/>
        <dbReference type="ChEBI" id="CHEBI:58066"/>
        <dbReference type="ChEBI" id="CHEBI:58274"/>
        <dbReference type="ChEBI" id="CHEBI:58349"/>
        <dbReference type="EC" id="1.2.1.41"/>
    </reaction>
</comment>
<comment type="pathway">
    <text evidence="1">Amino-acid biosynthesis; L-proline biosynthesis; L-glutamate 5-semialdehyde from L-glutamate: step 2/2.</text>
</comment>
<comment type="subcellular location">
    <subcellularLocation>
        <location evidence="1">Cytoplasm</location>
    </subcellularLocation>
</comment>
<comment type="similarity">
    <text evidence="1">Belongs to the gamma-glutamyl phosphate reductase family.</text>
</comment>
<accession>A7NSB7</accession>
<protein>
    <recommendedName>
        <fullName evidence="1">Gamma-glutamyl phosphate reductase</fullName>
        <shortName evidence="1">GPR</shortName>
        <ecNumber evidence="1">1.2.1.41</ecNumber>
    </recommendedName>
    <alternativeName>
        <fullName evidence="1">Glutamate-5-semialdehyde dehydrogenase</fullName>
    </alternativeName>
    <alternativeName>
        <fullName evidence="1">Glutamyl-gamma-semialdehyde dehydrogenase</fullName>
        <shortName evidence="1">GSA dehydrogenase</shortName>
    </alternativeName>
</protein>
<proteinExistence type="inferred from homology"/>
<sequence length="423" mass="44875">MTNLEEIGARARAAGRRLALMPTERKNAALEAIAAALLDEANAAEVLAANADDVAAGRDAGLSPALIDRMTLTPQRLAAIAADTRTVAGLPDPVGERFDATVLENGLRVHKRRVPLGVVGVIYEARPNVTVDVAALCLKSGNAAILRGGKEITRSCAALTRLIQNALAQTGLPADAIQVIDNPDRALVEQLLRLDRYVDVIIPRGGAGLHRFCREKASIPVITGGIGVCHIYVDQAADLEMVVPIVHNAKVQRPSVCNALDTLLVHRAVAAEMLPAVARDLLASNVELRVDEEAMALLRAAGFDTPQIVPAQESDFGVEFMALILSIRVVAGLDEALEHIARFGDHSDAIITRDPATAEAFVQAVDSSAVFVNASTRFNDGGQLGLGAEIAISTQKLHARGPMALRELTSYKWVVEGDGHVRA</sequence>
<dbReference type="EC" id="1.2.1.41" evidence="1"/>
<dbReference type="EMBL" id="CP000804">
    <property type="protein sequence ID" value="ABU60463.1"/>
    <property type="molecule type" value="Genomic_DNA"/>
</dbReference>
<dbReference type="RefSeq" id="WP_012122884.1">
    <property type="nucleotide sequence ID" value="NC_009767.1"/>
</dbReference>
<dbReference type="SMR" id="A7NSB7"/>
<dbReference type="STRING" id="383372.Rcas_4447"/>
<dbReference type="KEGG" id="rca:Rcas_4447"/>
<dbReference type="eggNOG" id="COG0014">
    <property type="taxonomic scope" value="Bacteria"/>
</dbReference>
<dbReference type="HOGENOM" id="CLU_030231_0_0_0"/>
<dbReference type="OrthoDB" id="9809970at2"/>
<dbReference type="UniPathway" id="UPA00098">
    <property type="reaction ID" value="UER00360"/>
</dbReference>
<dbReference type="Proteomes" id="UP000000263">
    <property type="component" value="Chromosome"/>
</dbReference>
<dbReference type="GO" id="GO:0005737">
    <property type="term" value="C:cytoplasm"/>
    <property type="evidence" value="ECO:0007669"/>
    <property type="project" value="UniProtKB-SubCell"/>
</dbReference>
<dbReference type="GO" id="GO:0004350">
    <property type="term" value="F:glutamate-5-semialdehyde dehydrogenase activity"/>
    <property type="evidence" value="ECO:0007669"/>
    <property type="project" value="UniProtKB-UniRule"/>
</dbReference>
<dbReference type="GO" id="GO:0050661">
    <property type="term" value="F:NADP binding"/>
    <property type="evidence" value="ECO:0007669"/>
    <property type="project" value="InterPro"/>
</dbReference>
<dbReference type="GO" id="GO:0055129">
    <property type="term" value="P:L-proline biosynthetic process"/>
    <property type="evidence" value="ECO:0007669"/>
    <property type="project" value="UniProtKB-UniRule"/>
</dbReference>
<dbReference type="CDD" id="cd07079">
    <property type="entry name" value="ALDH_F18-19_ProA-GPR"/>
    <property type="match status" value="1"/>
</dbReference>
<dbReference type="FunFam" id="3.40.309.10:FF:000006">
    <property type="entry name" value="Gamma-glutamyl phosphate reductase"/>
    <property type="match status" value="1"/>
</dbReference>
<dbReference type="Gene3D" id="3.40.605.10">
    <property type="entry name" value="Aldehyde Dehydrogenase, Chain A, domain 1"/>
    <property type="match status" value="1"/>
</dbReference>
<dbReference type="Gene3D" id="3.40.309.10">
    <property type="entry name" value="Aldehyde Dehydrogenase, Chain A, domain 2"/>
    <property type="match status" value="1"/>
</dbReference>
<dbReference type="HAMAP" id="MF_00412">
    <property type="entry name" value="ProA"/>
    <property type="match status" value="1"/>
</dbReference>
<dbReference type="InterPro" id="IPR016161">
    <property type="entry name" value="Ald_DH/histidinol_DH"/>
</dbReference>
<dbReference type="InterPro" id="IPR016163">
    <property type="entry name" value="Ald_DH_C"/>
</dbReference>
<dbReference type="InterPro" id="IPR016162">
    <property type="entry name" value="Ald_DH_N"/>
</dbReference>
<dbReference type="InterPro" id="IPR015590">
    <property type="entry name" value="Aldehyde_DH_dom"/>
</dbReference>
<dbReference type="InterPro" id="IPR012134">
    <property type="entry name" value="Glu-5-SA_DH"/>
</dbReference>
<dbReference type="InterPro" id="IPR000965">
    <property type="entry name" value="GPR_dom"/>
</dbReference>
<dbReference type="NCBIfam" id="NF001221">
    <property type="entry name" value="PRK00197.1"/>
    <property type="match status" value="1"/>
</dbReference>
<dbReference type="NCBIfam" id="TIGR00407">
    <property type="entry name" value="proA"/>
    <property type="match status" value="1"/>
</dbReference>
<dbReference type="PANTHER" id="PTHR11063:SF8">
    <property type="entry name" value="DELTA-1-PYRROLINE-5-CARBOXYLATE SYNTHASE"/>
    <property type="match status" value="1"/>
</dbReference>
<dbReference type="PANTHER" id="PTHR11063">
    <property type="entry name" value="GLUTAMATE SEMIALDEHYDE DEHYDROGENASE"/>
    <property type="match status" value="1"/>
</dbReference>
<dbReference type="Pfam" id="PF00171">
    <property type="entry name" value="Aldedh"/>
    <property type="match status" value="1"/>
</dbReference>
<dbReference type="PIRSF" id="PIRSF000151">
    <property type="entry name" value="GPR"/>
    <property type="match status" value="1"/>
</dbReference>
<dbReference type="SUPFAM" id="SSF53720">
    <property type="entry name" value="ALDH-like"/>
    <property type="match status" value="1"/>
</dbReference>
<organism>
    <name type="scientific">Roseiflexus castenholzii (strain DSM 13941 / HLO8)</name>
    <dbReference type="NCBI Taxonomy" id="383372"/>
    <lineage>
        <taxon>Bacteria</taxon>
        <taxon>Bacillati</taxon>
        <taxon>Chloroflexota</taxon>
        <taxon>Chloroflexia</taxon>
        <taxon>Chloroflexales</taxon>
        <taxon>Roseiflexineae</taxon>
        <taxon>Roseiflexaceae</taxon>
        <taxon>Roseiflexus</taxon>
    </lineage>
</organism>
<name>PROA_ROSCS</name>
<reference key="1">
    <citation type="submission" date="2007-08" db="EMBL/GenBank/DDBJ databases">
        <title>Complete sequence of Roseiflexus castenholzii DSM 13941.</title>
        <authorList>
            <consortium name="US DOE Joint Genome Institute"/>
            <person name="Copeland A."/>
            <person name="Lucas S."/>
            <person name="Lapidus A."/>
            <person name="Barry K."/>
            <person name="Glavina del Rio T."/>
            <person name="Dalin E."/>
            <person name="Tice H."/>
            <person name="Pitluck S."/>
            <person name="Thompson L.S."/>
            <person name="Brettin T."/>
            <person name="Bruce D."/>
            <person name="Detter J.C."/>
            <person name="Han C."/>
            <person name="Tapia R."/>
            <person name="Schmutz J."/>
            <person name="Larimer F."/>
            <person name="Land M."/>
            <person name="Hauser L."/>
            <person name="Kyrpides N."/>
            <person name="Mikhailova N."/>
            <person name="Bryant D.A."/>
            <person name="Hanada S."/>
            <person name="Tsukatani Y."/>
            <person name="Richardson P."/>
        </authorList>
    </citation>
    <scope>NUCLEOTIDE SEQUENCE [LARGE SCALE GENOMIC DNA]</scope>
    <source>
        <strain>DSM 13941 / HLO8</strain>
    </source>
</reference>
<feature type="chain" id="PRO_0000340909" description="Gamma-glutamyl phosphate reductase">
    <location>
        <begin position="1"/>
        <end position="423"/>
    </location>
</feature>